<accession>F4JJ23</accession>
<accession>O65668</accession>
<feature type="chain" id="PRO_0000430891" description="Protein NEN4">
    <location>
        <begin position="1"/>
        <end position="255"/>
    </location>
</feature>
<feature type="domain" description="Exonuclease" evidence="3">
    <location>
        <begin position="11"/>
        <end position="174"/>
    </location>
</feature>
<feature type="active site" description="Proton donor/acceptor" evidence="2">
    <location>
        <position position="161"/>
    </location>
</feature>
<feature type="binding site" evidence="2">
    <location>
        <position position="14"/>
    </location>
    <ligand>
        <name>Mg(2+)</name>
        <dbReference type="ChEBI" id="CHEBI:18420"/>
        <label>1</label>
    </ligand>
</feature>
<feature type="binding site" evidence="2">
    <location>
        <position position="14"/>
    </location>
    <ligand>
        <name>Mg(2+)</name>
        <dbReference type="ChEBI" id="CHEBI:18420"/>
        <label>2</label>
    </ligand>
</feature>
<feature type="binding site" evidence="2">
    <location>
        <position position="16"/>
    </location>
    <ligand>
        <name>Mg(2+)</name>
        <dbReference type="ChEBI" id="CHEBI:18420"/>
        <label>1</label>
    </ligand>
</feature>
<feature type="binding site" evidence="2">
    <location>
        <position position="166"/>
    </location>
    <ligand>
        <name>Mg(2+)</name>
        <dbReference type="ChEBI" id="CHEBI:18420"/>
        <label>1</label>
    </ligand>
</feature>
<name>NEN4_ARATH</name>
<keyword id="KW-0269">Exonuclease</keyword>
<keyword id="KW-0378">Hydrolase</keyword>
<keyword id="KW-0460">Magnesium</keyword>
<keyword id="KW-0479">Metal-binding</keyword>
<keyword id="KW-0540">Nuclease</keyword>
<keyword id="KW-0539">Nucleus</keyword>
<keyword id="KW-1185">Reference proteome</keyword>
<protein>
    <recommendedName>
        <fullName evidence="5">Protein NEN4</fullName>
    </recommendedName>
    <alternativeName>
        <fullName evidence="5">NAC45/NAC86-dependent exonuclease-domain protein 4</fullName>
        <ecNumber>3.1.11.-</ecNumber>
    </alternativeName>
</protein>
<reference key="1">
    <citation type="journal article" date="1999" name="Nature">
        <title>Sequence and analysis of chromosome 4 of the plant Arabidopsis thaliana.</title>
        <authorList>
            <person name="Mayer K.F.X."/>
            <person name="Schueller C."/>
            <person name="Wambutt R."/>
            <person name="Murphy G."/>
            <person name="Volckaert G."/>
            <person name="Pohl T."/>
            <person name="Duesterhoeft A."/>
            <person name="Stiekema W."/>
            <person name="Entian K.-D."/>
            <person name="Terryn N."/>
            <person name="Harris B."/>
            <person name="Ansorge W."/>
            <person name="Brandt P."/>
            <person name="Grivell L.A."/>
            <person name="Rieger M."/>
            <person name="Weichselgartner M."/>
            <person name="de Simone V."/>
            <person name="Obermaier B."/>
            <person name="Mache R."/>
            <person name="Mueller M."/>
            <person name="Kreis M."/>
            <person name="Delseny M."/>
            <person name="Puigdomenech P."/>
            <person name="Watson M."/>
            <person name="Schmidtheini T."/>
            <person name="Reichert B."/>
            <person name="Portetelle D."/>
            <person name="Perez-Alonso M."/>
            <person name="Boutry M."/>
            <person name="Bancroft I."/>
            <person name="Vos P."/>
            <person name="Hoheisel J."/>
            <person name="Zimmermann W."/>
            <person name="Wedler H."/>
            <person name="Ridley P."/>
            <person name="Langham S.-A."/>
            <person name="McCullagh B."/>
            <person name="Bilham L."/>
            <person name="Robben J."/>
            <person name="van der Schueren J."/>
            <person name="Grymonprez B."/>
            <person name="Chuang Y.-J."/>
            <person name="Vandenbussche F."/>
            <person name="Braeken M."/>
            <person name="Weltjens I."/>
            <person name="Voet M."/>
            <person name="Bastiaens I."/>
            <person name="Aert R."/>
            <person name="Defoor E."/>
            <person name="Weitzenegger T."/>
            <person name="Bothe G."/>
            <person name="Ramsperger U."/>
            <person name="Hilbert H."/>
            <person name="Braun M."/>
            <person name="Holzer E."/>
            <person name="Brandt A."/>
            <person name="Peters S."/>
            <person name="van Staveren M."/>
            <person name="Dirkse W."/>
            <person name="Mooijman P."/>
            <person name="Klein Lankhorst R."/>
            <person name="Rose M."/>
            <person name="Hauf J."/>
            <person name="Koetter P."/>
            <person name="Berneiser S."/>
            <person name="Hempel S."/>
            <person name="Feldpausch M."/>
            <person name="Lamberth S."/>
            <person name="Van den Daele H."/>
            <person name="De Keyser A."/>
            <person name="Buysshaert C."/>
            <person name="Gielen J."/>
            <person name="Villarroel R."/>
            <person name="De Clercq R."/>
            <person name="van Montagu M."/>
            <person name="Rogers J."/>
            <person name="Cronin A."/>
            <person name="Quail M.A."/>
            <person name="Bray-Allen S."/>
            <person name="Clark L."/>
            <person name="Doggett J."/>
            <person name="Hall S."/>
            <person name="Kay M."/>
            <person name="Lennard N."/>
            <person name="McLay K."/>
            <person name="Mayes R."/>
            <person name="Pettett A."/>
            <person name="Rajandream M.A."/>
            <person name="Lyne M."/>
            <person name="Benes V."/>
            <person name="Rechmann S."/>
            <person name="Borkova D."/>
            <person name="Bloecker H."/>
            <person name="Scharfe M."/>
            <person name="Grimm M."/>
            <person name="Loehnert T.-H."/>
            <person name="Dose S."/>
            <person name="de Haan M."/>
            <person name="Maarse A.C."/>
            <person name="Schaefer M."/>
            <person name="Mueller-Auer S."/>
            <person name="Gabel C."/>
            <person name="Fuchs M."/>
            <person name="Fartmann B."/>
            <person name="Granderath K."/>
            <person name="Dauner D."/>
            <person name="Herzl A."/>
            <person name="Neumann S."/>
            <person name="Argiriou A."/>
            <person name="Vitale D."/>
            <person name="Liguori R."/>
            <person name="Piravandi E."/>
            <person name="Massenet O."/>
            <person name="Quigley F."/>
            <person name="Clabauld G."/>
            <person name="Muendlein A."/>
            <person name="Felber R."/>
            <person name="Schnabl S."/>
            <person name="Hiller R."/>
            <person name="Schmidt W."/>
            <person name="Lecharny A."/>
            <person name="Aubourg S."/>
            <person name="Chefdor F."/>
            <person name="Cooke R."/>
            <person name="Berger C."/>
            <person name="Monfort A."/>
            <person name="Casacuberta E."/>
            <person name="Gibbons T."/>
            <person name="Weber N."/>
            <person name="Vandenbol M."/>
            <person name="Bargues M."/>
            <person name="Terol J."/>
            <person name="Torres A."/>
            <person name="Perez-Perez A."/>
            <person name="Purnelle B."/>
            <person name="Bent E."/>
            <person name="Johnson S."/>
            <person name="Tacon D."/>
            <person name="Jesse T."/>
            <person name="Heijnen L."/>
            <person name="Schwarz S."/>
            <person name="Scholler P."/>
            <person name="Heber S."/>
            <person name="Francs P."/>
            <person name="Bielke C."/>
            <person name="Frishman D."/>
            <person name="Haase D."/>
            <person name="Lemcke K."/>
            <person name="Mewes H.-W."/>
            <person name="Stocker S."/>
            <person name="Zaccaria P."/>
            <person name="Bevan M."/>
            <person name="Wilson R.K."/>
            <person name="de la Bastide M."/>
            <person name="Habermann K."/>
            <person name="Parnell L."/>
            <person name="Dedhia N."/>
            <person name="Gnoj L."/>
            <person name="Schutz K."/>
            <person name="Huang E."/>
            <person name="Spiegel L."/>
            <person name="Sekhon M."/>
            <person name="Murray J."/>
            <person name="Sheet P."/>
            <person name="Cordes M."/>
            <person name="Abu-Threideh J."/>
            <person name="Stoneking T."/>
            <person name="Kalicki J."/>
            <person name="Graves T."/>
            <person name="Harmon G."/>
            <person name="Edwards J."/>
            <person name="Latreille P."/>
            <person name="Courtney L."/>
            <person name="Cloud J."/>
            <person name="Abbott A."/>
            <person name="Scott K."/>
            <person name="Johnson D."/>
            <person name="Minx P."/>
            <person name="Bentley D."/>
            <person name="Fulton B."/>
            <person name="Miller N."/>
            <person name="Greco T."/>
            <person name="Kemp K."/>
            <person name="Kramer J."/>
            <person name="Fulton L."/>
            <person name="Mardis E."/>
            <person name="Dante M."/>
            <person name="Pepin K."/>
            <person name="Hillier L.W."/>
            <person name="Nelson J."/>
            <person name="Spieth J."/>
            <person name="Ryan E."/>
            <person name="Andrews S."/>
            <person name="Geisel C."/>
            <person name="Layman D."/>
            <person name="Du H."/>
            <person name="Ali J."/>
            <person name="Berghoff A."/>
            <person name="Jones K."/>
            <person name="Drone K."/>
            <person name="Cotton M."/>
            <person name="Joshu C."/>
            <person name="Antonoiu B."/>
            <person name="Zidanic M."/>
            <person name="Strong C."/>
            <person name="Sun H."/>
            <person name="Lamar B."/>
            <person name="Yordan C."/>
            <person name="Ma P."/>
            <person name="Zhong J."/>
            <person name="Preston R."/>
            <person name="Vil D."/>
            <person name="Shekher M."/>
            <person name="Matero A."/>
            <person name="Shah R."/>
            <person name="Swaby I.K."/>
            <person name="O'Shaughnessy A."/>
            <person name="Rodriguez M."/>
            <person name="Hoffman J."/>
            <person name="Till S."/>
            <person name="Granat S."/>
            <person name="Shohdy N."/>
            <person name="Hasegawa A."/>
            <person name="Hameed A."/>
            <person name="Lodhi M."/>
            <person name="Johnson A."/>
            <person name="Chen E."/>
            <person name="Marra M.A."/>
            <person name="Martienssen R."/>
            <person name="McCombie W.R."/>
        </authorList>
    </citation>
    <scope>NUCLEOTIDE SEQUENCE [LARGE SCALE GENOMIC DNA]</scope>
    <source>
        <strain>cv. Columbia</strain>
    </source>
</reference>
<reference key="2">
    <citation type="journal article" date="2017" name="Plant J.">
        <title>Araport11: a complete reannotation of the Arabidopsis thaliana reference genome.</title>
        <authorList>
            <person name="Cheng C.Y."/>
            <person name="Krishnakumar V."/>
            <person name="Chan A.P."/>
            <person name="Thibaud-Nissen F."/>
            <person name="Schobel S."/>
            <person name="Town C.D."/>
        </authorList>
    </citation>
    <scope>GENOME REANNOTATION</scope>
    <source>
        <strain>cv. Columbia</strain>
    </source>
</reference>
<reference key="3">
    <citation type="journal article" date="2014" name="Science">
        <title>Plant development. Arabidopsis NAC45/86 direct sieve element morphogenesis culminating in enucleation.</title>
        <authorList>
            <person name="Furuta K.M."/>
            <person name="Yadav S.R."/>
            <person name="Lehesranta S."/>
            <person name="Belevich I."/>
            <person name="Miyashima S."/>
            <person name="Heo J.O."/>
            <person name="Vaten A."/>
            <person name="Lindgren O."/>
            <person name="De Rybel B."/>
            <person name="Van Isterdael G."/>
            <person name="Somervuo P."/>
            <person name="Lichtenberger R."/>
            <person name="Rocha R."/>
            <person name="Thitamadee S."/>
            <person name="Taehtiharju S."/>
            <person name="Auvinen P."/>
            <person name="Beeckman T."/>
            <person name="Jokitalo E."/>
            <person name="Helariutta Y."/>
        </authorList>
    </citation>
    <scope>FUNCTION</scope>
    <scope>SUBCELLULAR LOCATION</scope>
    <scope>TISSUE SPECIFICITY</scope>
    <scope>INDUCTION BY NAC045 AND NAC086</scope>
    <scope>DISRUPTION PHENOTYPE</scope>
</reference>
<organism evidence="8">
    <name type="scientific">Arabidopsis thaliana</name>
    <name type="common">Mouse-ear cress</name>
    <dbReference type="NCBI Taxonomy" id="3702"/>
    <lineage>
        <taxon>Eukaryota</taxon>
        <taxon>Viridiplantae</taxon>
        <taxon>Streptophyta</taxon>
        <taxon>Embryophyta</taxon>
        <taxon>Tracheophyta</taxon>
        <taxon>Spermatophyta</taxon>
        <taxon>Magnoliopsida</taxon>
        <taxon>eudicotyledons</taxon>
        <taxon>Gunneridae</taxon>
        <taxon>Pentapetalae</taxon>
        <taxon>rosids</taxon>
        <taxon>malvids</taxon>
        <taxon>Brassicales</taxon>
        <taxon>Brassicaceae</taxon>
        <taxon>Camelineae</taxon>
        <taxon>Arabidopsis</taxon>
    </lineage>
</organism>
<evidence type="ECO:0000250" key="1">
    <source>
        <dbReference type="UniProtKB" id="Q682U6"/>
    </source>
</evidence>
<evidence type="ECO:0000250" key="2">
    <source>
        <dbReference type="UniProtKB" id="Q91XB0"/>
    </source>
</evidence>
<evidence type="ECO:0000255" key="3"/>
<evidence type="ECO:0000269" key="4">
    <source>
    </source>
</evidence>
<evidence type="ECO:0000303" key="5">
    <source>
    </source>
</evidence>
<evidence type="ECO:0000305" key="6"/>
<evidence type="ECO:0000312" key="7">
    <source>
        <dbReference type="Araport" id="AT4G39810"/>
    </source>
</evidence>
<evidence type="ECO:0000312" key="8">
    <source>
        <dbReference type="Proteomes" id="UP000006548"/>
    </source>
</evidence>
<comment type="function">
    <text evidence="4">Probable exonuclease required for enuclation of sieve elements.</text>
</comment>
<comment type="cofactor">
    <cofactor evidence="1">
        <name>Mg(2+)</name>
        <dbReference type="ChEBI" id="CHEBI:18420"/>
    </cofactor>
</comment>
<comment type="subcellular location">
    <subcellularLocation>
        <location evidence="4">Nucleus</location>
    </subcellularLocation>
    <text evidence="4">Accumulates in the nuclei prior to enuclation.</text>
</comment>
<comment type="tissue specificity">
    <text evidence="4">Expressed in the sieve elements and phloem pole pericycle cells.</text>
</comment>
<comment type="induction">
    <text evidence="4">Regulated by the transcription factors NAC045 and NAC086.</text>
</comment>
<comment type="disruption phenotype">
    <text evidence="4">Shorter root phenotype and impaired phloem function.</text>
</comment>
<comment type="sequence caution" evidence="6">
    <conflict type="erroneous gene model prediction">
        <sequence resource="EMBL-CDS" id="CAA18767"/>
    </conflict>
</comment>
<comment type="sequence caution" evidence="6">
    <conflict type="erroneous gene model prediction">
        <sequence resource="EMBL-CDS" id="CAB80644"/>
    </conflict>
</comment>
<proteinExistence type="evidence at transcript level"/>
<dbReference type="EC" id="3.1.11.-"/>
<dbReference type="EMBL" id="AL022605">
    <property type="protein sequence ID" value="CAA18767.1"/>
    <property type="status" value="ALT_SEQ"/>
    <property type="molecule type" value="Genomic_DNA"/>
</dbReference>
<dbReference type="EMBL" id="AL161595">
    <property type="protein sequence ID" value="CAB80644.1"/>
    <property type="status" value="ALT_SEQ"/>
    <property type="molecule type" value="Genomic_DNA"/>
</dbReference>
<dbReference type="EMBL" id="CP002687">
    <property type="protein sequence ID" value="AEE87122.1"/>
    <property type="molecule type" value="Genomic_DNA"/>
</dbReference>
<dbReference type="PIR" id="T05018">
    <property type="entry name" value="T05018"/>
</dbReference>
<dbReference type="RefSeq" id="NP_195691.4">
    <property type="nucleotide sequence ID" value="NM_120144.5"/>
</dbReference>
<dbReference type="SMR" id="F4JJ23"/>
<dbReference type="FunCoup" id="F4JJ23">
    <property type="interactions" value="34"/>
</dbReference>
<dbReference type="STRING" id="3702.F4JJ23"/>
<dbReference type="PaxDb" id="3702-AT4G39810.1"/>
<dbReference type="EnsemblPlants" id="AT4G39810.1">
    <property type="protein sequence ID" value="AT4G39810.1"/>
    <property type="gene ID" value="AT4G39810"/>
</dbReference>
<dbReference type="GeneID" id="830140"/>
<dbReference type="Gramene" id="AT4G39810.1">
    <property type="protein sequence ID" value="AT4G39810.1"/>
    <property type="gene ID" value="AT4G39810"/>
</dbReference>
<dbReference type="KEGG" id="ath:AT4G39810"/>
<dbReference type="Araport" id="AT4G39810"/>
<dbReference type="TAIR" id="AT4G39810">
    <property type="gene designation" value="NEN4"/>
</dbReference>
<dbReference type="eggNOG" id="ENOG502QPJ4">
    <property type="taxonomic scope" value="Eukaryota"/>
</dbReference>
<dbReference type="HOGENOM" id="CLU_079769_0_0_1"/>
<dbReference type="InParanoid" id="F4JJ23"/>
<dbReference type="OMA" id="TMRRPEM"/>
<dbReference type="PRO" id="PR:F4JJ23"/>
<dbReference type="Proteomes" id="UP000006548">
    <property type="component" value="Chromosome 4"/>
</dbReference>
<dbReference type="ExpressionAtlas" id="F4JJ23">
    <property type="expression patterns" value="baseline and differential"/>
</dbReference>
<dbReference type="GO" id="GO:0005634">
    <property type="term" value="C:nucleus"/>
    <property type="evidence" value="ECO:0007669"/>
    <property type="project" value="UniProtKB-SubCell"/>
</dbReference>
<dbReference type="GO" id="GO:0004527">
    <property type="term" value="F:exonuclease activity"/>
    <property type="evidence" value="ECO:0007669"/>
    <property type="project" value="UniProtKB-KW"/>
</dbReference>
<dbReference type="GO" id="GO:0046872">
    <property type="term" value="F:metal ion binding"/>
    <property type="evidence" value="ECO:0007669"/>
    <property type="project" value="UniProtKB-KW"/>
</dbReference>
<dbReference type="GO" id="GO:0003676">
    <property type="term" value="F:nucleic acid binding"/>
    <property type="evidence" value="ECO:0007669"/>
    <property type="project" value="InterPro"/>
</dbReference>
<dbReference type="CDD" id="cd06127">
    <property type="entry name" value="DEDDh"/>
    <property type="match status" value="1"/>
</dbReference>
<dbReference type="FunFam" id="3.30.420.10:FF:000040">
    <property type="entry name" value="Exonuclease family protein"/>
    <property type="match status" value="1"/>
</dbReference>
<dbReference type="Gene3D" id="3.30.420.10">
    <property type="entry name" value="Ribonuclease H-like superfamily/Ribonuclease H"/>
    <property type="match status" value="1"/>
</dbReference>
<dbReference type="InterPro" id="IPR013520">
    <property type="entry name" value="Exonuclease_RNaseT/DNA_pol3"/>
</dbReference>
<dbReference type="InterPro" id="IPR012337">
    <property type="entry name" value="RNaseH-like_sf"/>
</dbReference>
<dbReference type="InterPro" id="IPR036397">
    <property type="entry name" value="RNaseH_sf"/>
</dbReference>
<dbReference type="PANTHER" id="PTHR30231">
    <property type="entry name" value="DNA POLYMERASE III SUBUNIT EPSILON"/>
    <property type="match status" value="1"/>
</dbReference>
<dbReference type="PANTHER" id="PTHR30231:SF26">
    <property type="entry name" value="PROTEIN NEN4"/>
    <property type="match status" value="1"/>
</dbReference>
<dbReference type="Pfam" id="PF00929">
    <property type="entry name" value="RNase_T"/>
    <property type="match status" value="1"/>
</dbReference>
<dbReference type="SMART" id="SM00479">
    <property type="entry name" value="EXOIII"/>
    <property type="match status" value="1"/>
</dbReference>
<dbReference type="SUPFAM" id="SSF53098">
    <property type="entry name" value="Ribonuclease H-like"/>
    <property type="match status" value="1"/>
</dbReference>
<gene>
    <name evidence="5" type="primary">NEN4</name>
    <name evidence="7" type="ordered locus">At4g39810</name>
</gene>
<sequence length="255" mass="28508">MAVQTFPNEIVFFDLETNVPNKAGQHFHILEFGAIIVCPKKLEELESFTTLIQPKDLSVVSIRSSRSDGITRAKVTNAPSFEDVAEKIHGLLNGRIWAGHNIRRFDCVRIKEAFAEIGKAAPEPSGIIDSLGLLSDKFGKRAGNMKMASLAAYFGLGVQKHRSLDDVRMNLEVLKHCATVLFLESTLPNHLEGKWHTSSKIMTRSRRNYQIAQRAMPYSKGSLEKMTQNVKNLLSKAQGNQTLQSLINHSHSLLR</sequence>